<sequence>MIIDTTEIETINSFSKLESLKEVYGIIWMLVPIVTLVLGITIGVLVIVWLEREISAGIQQRIGPEYAGPLGILQALADGTKLLLKENLIPSTGDTRLFSIGPSIAVISIFLSYSVIPFGDHLVLADLSIGVFFWIAISSIAPVGLLMSGYGSNNKYSFLGGLRAAAQSISYEIPLALCVLSISLLSNSLSTVDIVEAQSKYGFWGWNLWRQPIGFIVFLISSLAECERLPFDLPEAEEELVAGYQTEYSGIKFGLFYIASYLNLLVSSLFVTVLYLGGWNLSIPYIFVPDIFGINKGGKVFGTLIGIFITLAKTYLFLFIPIATRWTLPRLRMDQLLNLGWKFLLPISLGNLLLTTSSQLLSL</sequence>
<organism>
    <name type="scientific">Solanum lycopersicum</name>
    <name type="common">Tomato</name>
    <name type="synonym">Lycopersicon esculentum</name>
    <dbReference type="NCBI Taxonomy" id="4081"/>
    <lineage>
        <taxon>Eukaryota</taxon>
        <taxon>Viridiplantae</taxon>
        <taxon>Streptophyta</taxon>
        <taxon>Embryophyta</taxon>
        <taxon>Tracheophyta</taxon>
        <taxon>Spermatophyta</taxon>
        <taxon>Magnoliopsida</taxon>
        <taxon>eudicotyledons</taxon>
        <taxon>Gunneridae</taxon>
        <taxon>Pentapetalae</taxon>
        <taxon>asterids</taxon>
        <taxon>lamiids</taxon>
        <taxon>Solanales</taxon>
        <taxon>Solanaceae</taxon>
        <taxon>Solanoideae</taxon>
        <taxon>Solaneae</taxon>
        <taxon>Solanum</taxon>
        <taxon>Solanum subgen. Lycopersicon</taxon>
    </lineage>
</organism>
<geneLocation type="chloroplast"/>
<accession>Q2MI45</accession>
<proteinExistence type="inferred from homology"/>
<comment type="function">
    <text evidence="1">NDH shuttles electrons from NAD(P)H:plastoquinone, via FMN and iron-sulfur (Fe-S) centers, to quinones in the photosynthetic chain and possibly in a chloroplast respiratory chain. The immediate electron acceptor for the enzyme in this species is believed to be plastoquinone. Couples the redox reaction to proton translocation, and thus conserves the redox energy in a proton gradient.</text>
</comment>
<comment type="catalytic activity">
    <reaction evidence="1">
        <text>a plastoquinone + NADH + (n+1) H(+)(in) = a plastoquinol + NAD(+) + n H(+)(out)</text>
        <dbReference type="Rhea" id="RHEA:42608"/>
        <dbReference type="Rhea" id="RHEA-COMP:9561"/>
        <dbReference type="Rhea" id="RHEA-COMP:9562"/>
        <dbReference type="ChEBI" id="CHEBI:15378"/>
        <dbReference type="ChEBI" id="CHEBI:17757"/>
        <dbReference type="ChEBI" id="CHEBI:57540"/>
        <dbReference type="ChEBI" id="CHEBI:57945"/>
        <dbReference type="ChEBI" id="CHEBI:62192"/>
    </reaction>
</comment>
<comment type="catalytic activity">
    <reaction evidence="1">
        <text>a plastoquinone + NADPH + (n+1) H(+)(in) = a plastoquinol + NADP(+) + n H(+)(out)</text>
        <dbReference type="Rhea" id="RHEA:42612"/>
        <dbReference type="Rhea" id="RHEA-COMP:9561"/>
        <dbReference type="Rhea" id="RHEA-COMP:9562"/>
        <dbReference type="ChEBI" id="CHEBI:15378"/>
        <dbReference type="ChEBI" id="CHEBI:17757"/>
        <dbReference type="ChEBI" id="CHEBI:57783"/>
        <dbReference type="ChEBI" id="CHEBI:58349"/>
        <dbReference type="ChEBI" id="CHEBI:62192"/>
    </reaction>
</comment>
<comment type="subunit">
    <text evidence="1">NDH is composed of at least 16 different subunits, 5 of which are encoded in the nucleus.</text>
</comment>
<comment type="subcellular location">
    <subcellularLocation>
        <location evidence="1">Plastid</location>
        <location evidence="1">Chloroplast thylakoid membrane</location>
        <topology evidence="1">Multi-pass membrane protein</topology>
    </subcellularLocation>
</comment>
<comment type="similarity">
    <text evidence="1">Belongs to the complex I subunit 1 family.</text>
</comment>
<evidence type="ECO:0000255" key="1">
    <source>
        <dbReference type="HAMAP-Rule" id="MF_01350"/>
    </source>
</evidence>
<dbReference type="EC" id="7.1.1.-" evidence="1"/>
<dbReference type="EMBL" id="DQ347959">
    <property type="protein sequence ID" value="ABC56356.1"/>
    <property type="molecule type" value="Genomic_DNA"/>
</dbReference>
<dbReference type="EMBL" id="AM087200">
    <property type="protein sequence ID" value="CAJ32450.1"/>
    <property type="molecule type" value="Genomic_DNA"/>
</dbReference>
<dbReference type="RefSeq" id="AP_004984.1">
    <property type="nucleotide sequence ID" value="AC_000188.1"/>
</dbReference>
<dbReference type="RefSeq" id="YP_008563144.1">
    <property type="nucleotide sequence ID" value="NC_007898.3"/>
</dbReference>
<dbReference type="SMR" id="Q2MI45"/>
<dbReference type="FunCoup" id="Q2MI45">
    <property type="interactions" value="29"/>
</dbReference>
<dbReference type="STRING" id="4081.Q2MI45"/>
<dbReference type="PaxDb" id="4081-Solyc11g021230.1.1"/>
<dbReference type="GeneID" id="3950452"/>
<dbReference type="KEGG" id="sly:3950452"/>
<dbReference type="eggNOG" id="KOG4770">
    <property type="taxonomic scope" value="Eukaryota"/>
</dbReference>
<dbReference type="InParanoid" id="Q2MI45"/>
<dbReference type="OrthoDB" id="1277114at2759"/>
<dbReference type="Proteomes" id="UP000004994">
    <property type="component" value="Chloroplast"/>
</dbReference>
<dbReference type="ExpressionAtlas" id="Q2MI45">
    <property type="expression patterns" value="baseline"/>
</dbReference>
<dbReference type="GO" id="GO:0009535">
    <property type="term" value="C:chloroplast thylakoid membrane"/>
    <property type="evidence" value="ECO:0007669"/>
    <property type="project" value="UniProtKB-SubCell"/>
</dbReference>
<dbReference type="GO" id="GO:0016655">
    <property type="term" value="F:oxidoreductase activity, acting on NAD(P)H, quinone or similar compound as acceptor"/>
    <property type="evidence" value="ECO:0007669"/>
    <property type="project" value="UniProtKB-UniRule"/>
</dbReference>
<dbReference type="GO" id="GO:0048038">
    <property type="term" value="F:quinone binding"/>
    <property type="evidence" value="ECO:0007669"/>
    <property type="project" value="UniProtKB-KW"/>
</dbReference>
<dbReference type="GO" id="GO:0009060">
    <property type="term" value="P:aerobic respiration"/>
    <property type="evidence" value="ECO:0000318"/>
    <property type="project" value="GO_Central"/>
</dbReference>
<dbReference type="GO" id="GO:0019684">
    <property type="term" value="P:photosynthesis, light reaction"/>
    <property type="evidence" value="ECO:0007669"/>
    <property type="project" value="UniProtKB-UniRule"/>
</dbReference>
<dbReference type="HAMAP" id="MF_01350">
    <property type="entry name" value="NDH1_NuoH"/>
    <property type="match status" value="1"/>
</dbReference>
<dbReference type="InterPro" id="IPR001694">
    <property type="entry name" value="NADH_UbQ_OxRdtase_su1/FPO"/>
</dbReference>
<dbReference type="InterPro" id="IPR018086">
    <property type="entry name" value="NADH_UbQ_OxRdtase_su1_CS"/>
</dbReference>
<dbReference type="NCBIfam" id="NF004741">
    <property type="entry name" value="PRK06076.1-2"/>
    <property type="match status" value="1"/>
</dbReference>
<dbReference type="PANTHER" id="PTHR11432">
    <property type="entry name" value="NADH DEHYDROGENASE SUBUNIT 1"/>
    <property type="match status" value="1"/>
</dbReference>
<dbReference type="PANTHER" id="PTHR11432:SF3">
    <property type="entry name" value="NADH-UBIQUINONE OXIDOREDUCTASE CHAIN 1"/>
    <property type="match status" value="1"/>
</dbReference>
<dbReference type="Pfam" id="PF00146">
    <property type="entry name" value="NADHdh"/>
    <property type="match status" value="1"/>
</dbReference>
<dbReference type="PROSITE" id="PS00667">
    <property type="entry name" value="COMPLEX1_ND1_1"/>
    <property type="match status" value="1"/>
</dbReference>
<dbReference type="PROSITE" id="PS00668">
    <property type="entry name" value="COMPLEX1_ND1_2"/>
    <property type="match status" value="1"/>
</dbReference>
<name>NU1C_SOLLC</name>
<keyword id="KW-0150">Chloroplast</keyword>
<keyword id="KW-0472">Membrane</keyword>
<keyword id="KW-0520">NAD</keyword>
<keyword id="KW-0521">NADP</keyword>
<keyword id="KW-0934">Plastid</keyword>
<keyword id="KW-0618">Plastoquinone</keyword>
<keyword id="KW-0874">Quinone</keyword>
<keyword id="KW-1185">Reference proteome</keyword>
<keyword id="KW-0793">Thylakoid</keyword>
<keyword id="KW-1278">Translocase</keyword>
<keyword id="KW-0812">Transmembrane</keyword>
<keyword id="KW-1133">Transmembrane helix</keyword>
<reference key="1">
    <citation type="journal article" date="2006" name="Theor. Appl. Genet.">
        <title>Complete chloroplast genome sequences of Solanum bulbocastanum, Solanum lycopersicum and comparative analyses with other Solanaceae genomes.</title>
        <authorList>
            <person name="Daniell H."/>
            <person name="Lee S.-B."/>
            <person name="Grevich J."/>
            <person name="Saski C."/>
            <person name="Quesada-Vargas T."/>
            <person name="Guda C."/>
            <person name="Tomkins J."/>
            <person name="Jansen R.K."/>
        </authorList>
    </citation>
    <scope>NUCLEOTIDE SEQUENCE [LARGE SCALE GENOMIC DNA]</scope>
    <source>
        <strain>cv. LA3023</strain>
    </source>
</reference>
<reference key="2">
    <citation type="journal article" date="2006" name="J. Mol. Evol.">
        <title>Sequence of the tomato chloroplast DNA and evolutionary comparison of solanaceous plastid genomes.</title>
        <authorList>
            <person name="Kahlau S."/>
            <person name="Aspinall S."/>
            <person name="Gray J.C."/>
            <person name="Bock R."/>
        </authorList>
    </citation>
    <scope>NUCLEOTIDE SEQUENCE [LARGE SCALE GENOMIC DNA]</scope>
    <source>
        <strain>cv. IPA-6</strain>
    </source>
</reference>
<protein>
    <recommendedName>
        <fullName evidence="1">NAD(P)H-quinone oxidoreductase subunit 1, chloroplastic</fullName>
        <ecNumber evidence="1">7.1.1.-</ecNumber>
    </recommendedName>
    <alternativeName>
        <fullName evidence="1">NAD(P)H dehydrogenase subunit 1</fullName>
        <shortName evidence="1">NDH subunit 1</shortName>
    </alternativeName>
    <alternativeName>
        <fullName evidence="1">NADH-plastoquinone oxidoreductase subunit 1</fullName>
    </alternativeName>
</protein>
<feature type="chain" id="PRO_0000240024" description="NAD(P)H-quinone oxidoreductase subunit 1, chloroplastic">
    <location>
        <begin position="1"/>
        <end position="363"/>
    </location>
</feature>
<feature type="transmembrane region" description="Helical" evidence="1">
    <location>
        <begin position="30"/>
        <end position="50"/>
    </location>
</feature>
<feature type="transmembrane region" description="Helical" evidence="1">
    <location>
        <begin position="98"/>
        <end position="118"/>
    </location>
</feature>
<feature type="transmembrane region" description="Helical" evidence="1">
    <location>
        <begin position="127"/>
        <end position="147"/>
    </location>
</feature>
<feature type="transmembrane region" description="Helical" evidence="1">
    <location>
        <begin position="165"/>
        <end position="185"/>
    </location>
</feature>
<feature type="transmembrane region" description="Helical" evidence="1">
    <location>
        <begin position="203"/>
        <end position="223"/>
    </location>
</feature>
<feature type="transmembrane region" description="Helical" evidence="1">
    <location>
        <begin position="248"/>
        <end position="268"/>
    </location>
</feature>
<feature type="transmembrane region" description="Helical" evidence="1">
    <location>
        <begin position="300"/>
        <end position="320"/>
    </location>
</feature>
<feature type="transmembrane region" description="Helical" evidence="1">
    <location>
        <begin position="336"/>
        <end position="356"/>
    </location>
</feature>
<gene>
    <name evidence="1" type="primary">ndhA</name>
</gene>